<dbReference type="EMBL" id="AL049488">
    <property type="protein sequence ID" value="CAB39791.1"/>
    <property type="molecule type" value="Genomic_DNA"/>
</dbReference>
<dbReference type="EMBL" id="AL161517">
    <property type="protein sequence ID" value="CAB78161.1"/>
    <property type="molecule type" value="Genomic_DNA"/>
</dbReference>
<dbReference type="EMBL" id="CP002687">
    <property type="protein sequence ID" value="AEE82874.1"/>
    <property type="molecule type" value="Genomic_DNA"/>
</dbReference>
<dbReference type="EMBL" id="AY087560">
    <property type="protein sequence ID" value="AAM65102.1"/>
    <property type="molecule type" value="mRNA"/>
</dbReference>
<dbReference type="PIR" id="T04053">
    <property type="entry name" value="T04053"/>
</dbReference>
<dbReference type="RefSeq" id="NP_192776.1">
    <property type="nucleotide sequence ID" value="NM_117106.3"/>
</dbReference>
<dbReference type="SMR" id="Q9SV84"/>
<dbReference type="FunCoup" id="Q9SV84">
    <property type="interactions" value="90"/>
</dbReference>
<dbReference type="STRING" id="3702.Q9SV84"/>
<dbReference type="TCDB" id="1.A.8.12.3">
    <property type="family name" value="the major intrinsic protein (mip) family"/>
</dbReference>
<dbReference type="GlyGen" id="Q9SV84">
    <property type="glycosylation" value="3 sites"/>
</dbReference>
<dbReference type="PaxDb" id="3702-AT4G10380.1"/>
<dbReference type="ProteomicsDB" id="249443"/>
<dbReference type="EnsemblPlants" id="AT4G10380.1">
    <property type="protein sequence ID" value="AT4G10380.1"/>
    <property type="gene ID" value="AT4G10380"/>
</dbReference>
<dbReference type="GeneID" id="826630"/>
<dbReference type="Gramene" id="AT4G10380.1">
    <property type="protein sequence ID" value="AT4G10380.1"/>
    <property type="gene ID" value="AT4G10380"/>
</dbReference>
<dbReference type="KEGG" id="ath:AT4G10380"/>
<dbReference type="Araport" id="AT4G10380"/>
<dbReference type="TAIR" id="AT4G10380">
    <property type="gene designation" value="NIP5"/>
</dbReference>
<dbReference type="eggNOG" id="KOG0223">
    <property type="taxonomic scope" value="Eukaryota"/>
</dbReference>
<dbReference type="HOGENOM" id="CLU_020019_3_1_1"/>
<dbReference type="InParanoid" id="Q9SV84"/>
<dbReference type="OMA" id="HSCFTDF"/>
<dbReference type="OrthoDB" id="3222at2759"/>
<dbReference type="PhylomeDB" id="Q9SV84"/>
<dbReference type="PRO" id="PR:Q9SV84"/>
<dbReference type="Proteomes" id="UP000006548">
    <property type="component" value="Chromosome 4"/>
</dbReference>
<dbReference type="ExpressionAtlas" id="Q9SV84">
    <property type="expression patterns" value="baseline and differential"/>
</dbReference>
<dbReference type="GO" id="GO:0016328">
    <property type="term" value="C:lateral plasma membrane"/>
    <property type="evidence" value="ECO:0000314"/>
    <property type="project" value="TAIR"/>
</dbReference>
<dbReference type="GO" id="GO:0005886">
    <property type="term" value="C:plasma membrane"/>
    <property type="evidence" value="ECO:0000314"/>
    <property type="project" value="TAIR"/>
</dbReference>
<dbReference type="GO" id="GO:0046715">
    <property type="term" value="F:active borate transmembrane transporter activity"/>
    <property type="evidence" value="ECO:0000314"/>
    <property type="project" value="TAIR"/>
</dbReference>
<dbReference type="GO" id="GO:0015105">
    <property type="term" value="F:arsenite transmembrane transporter activity"/>
    <property type="evidence" value="ECO:0000314"/>
    <property type="project" value="TAIR"/>
</dbReference>
<dbReference type="GO" id="GO:0015250">
    <property type="term" value="F:water channel activity"/>
    <property type="evidence" value="ECO:0000314"/>
    <property type="project" value="TAIR"/>
</dbReference>
<dbReference type="GO" id="GO:0015700">
    <property type="term" value="P:arsenite transport"/>
    <property type="evidence" value="ECO:0000314"/>
    <property type="project" value="TAIR"/>
</dbReference>
<dbReference type="GO" id="GO:0046713">
    <property type="term" value="P:borate transport"/>
    <property type="evidence" value="ECO:0000314"/>
    <property type="project" value="TAIR"/>
</dbReference>
<dbReference type="GO" id="GO:0080029">
    <property type="term" value="P:cellular response to boron-containing substance levels"/>
    <property type="evidence" value="ECO:0000270"/>
    <property type="project" value="TAIR"/>
</dbReference>
<dbReference type="GO" id="GO:0046685">
    <property type="term" value="P:response to arsenic-containing substance"/>
    <property type="evidence" value="ECO:0000315"/>
    <property type="project" value="TAIR"/>
</dbReference>
<dbReference type="GO" id="GO:0010036">
    <property type="term" value="P:response to boron-containing substance"/>
    <property type="evidence" value="ECO:0000315"/>
    <property type="project" value="TAIR"/>
</dbReference>
<dbReference type="FunFam" id="1.20.1080.10:FF:000013">
    <property type="entry name" value="Aquaporin NIP2-1"/>
    <property type="match status" value="1"/>
</dbReference>
<dbReference type="Gene3D" id="1.20.1080.10">
    <property type="entry name" value="Glycerol uptake facilitator protein"/>
    <property type="match status" value="1"/>
</dbReference>
<dbReference type="InterPro" id="IPR023271">
    <property type="entry name" value="Aquaporin-like"/>
</dbReference>
<dbReference type="InterPro" id="IPR034294">
    <property type="entry name" value="Aquaporin_transptr"/>
</dbReference>
<dbReference type="InterPro" id="IPR000425">
    <property type="entry name" value="MIP"/>
</dbReference>
<dbReference type="InterPro" id="IPR022357">
    <property type="entry name" value="MIP_CS"/>
</dbReference>
<dbReference type="PANTHER" id="PTHR45724">
    <property type="entry name" value="AQUAPORIN NIP2-1"/>
    <property type="match status" value="1"/>
</dbReference>
<dbReference type="PANTHER" id="PTHR45724:SF11">
    <property type="entry name" value="AQUAPORIN NIP5-1-RELATED"/>
    <property type="match status" value="1"/>
</dbReference>
<dbReference type="Pfam" id="PF00230">
    <property type="entry name" value="MIP"/>
    <property type="match status" value="1"/>
</dbReference>
<dbReference type="PRINTS" id="PR00783">
    <property type="entry name" value="MINTRINSICP"/>
</dbReference>
<dbReference type="SUPFAM" id="SSF81338">
    <property type="entry name" value="Aquaporin-like"/>
    <property type="match status" value="1"/>
</dbReference>
<dbReference type="PROSITE" id="PS00221">
    <property type="entry name" value="MIP"/>
    <property type="match status" value="1"/>
</dbReference>
<comment type="function">
    <text evidence="4">Boric acid transporter. Low water transport activity. Plays an important role as plasma membrane boric acid channel for the boron uptake required for plant growth and development under boron limitation.</text>
</comment>
<comment type="subcellular location">
    <subcellularLocation>
        <location evidence="4">Cell membrane</location>
        <topology evidence="4">Multi-pass membrane protein</topology>
    </subcellularLocation>
</comment>
<comment type="tissue specificity">
    <text evidence="3">Expressed in rosette leaves.</text>
</comment>
<comment type="induction">
    <text evidence="4">By boron limitation in the root elongation and the root hair zones.</text>
</comment>
<comment type="domain">
    <text>Aquaporins contain two tandem repeats each containing three membrane-spanning domains and a pore-forming loop with the signature motif Asn-Pro-Ala/Ser/Val (NPA).</text>
</comment>
<comment type="disruption phenotype">
    <text evidence="4">Plants display lower boric acid uptake into roots, lower biomass production, and increased sensitivity of root and shoot development to boron deficiency.</text>
</comment>
<comment type="similarity">
    <text evidence="5">Belongs to the MIP/aquaporin (TC 1.A.8) family. NIP (TC 1.A.8.12) subfamily.</text>
</comment>
<proteinExistence type="evidence at transcript level"/>
<accession>Q9SV84</accession>
<organism>
    <name type="scientific">Arabidopsis thaliana</name>
    <name type="common">Mouse-ear cress</name>
    <dbReference type="NCBI Taxonomy" id="3702"/>
    <lineage>
        <taxon>Eukaryota</taxon>
        <taxon>Viridiplantae</taxon>
        <taxon>Streptophyta</taxon>
        <taxon>Embryophyta</taxon>
        <taxon>Tracheophyta</taxon>
        <taxon>Spermatophyta</taxon>
        <taxon>Magnoliopsida</taxon>
        <taxon>eudicotyledons</taxon>
        <taxon>Gunneridae</taxon>
        <taxon>Pentapetalae</taxon>
        <taxon>rosids</taxon>
        <taxon>malvids</taxon>
        <taxon>Brassicales</taxon>
        <taxon>Brassicaceae</taxon>
        <taxon>Camelineae</taxon>
        <taxon>Arabidopsis</taxon>
    </lineage>
</organism>
<protein>
    <recommendedName>
        <fullName>Probable aquaporin NIP5-1</fullName>
    </recommendedName>
    <alternativeName>
        <fullName>NOD26-like intrinsic protein 5-1</fullName>
        <shortName>AtNIP5;1</shortName>
    </alternativeName>
    <alternativeName>
        <fullName>Nodulin-26-like major intrinsic protein 6</fullName>
        <shortName>NodLikeMip6</shortName>
        <shortName>Protein NLM6</shortName>
    </alternativeName>
</protein>
<feature type="chain" id="PRO_0000064068" description="Probable aquaporin NIP5-1">
    <location>
        <begin position="1"/>
        <end position="304"/>
    </location>
</feature>
<feature type="transmembrane region" description="Helical; Name=1" evidence="2">
    <location>
        <begin position="80"/>
        <end position="100"/>
    </location>
</feature>
<feature type="transmembrane region" description="Helical; Name=2" evidence="2">
    <location>
        <begin position="106"/>
        <end position="126"/>
    </location>
</feature>
<feature type="transmembrane region" description="Helical; Name=3" evidence="2">
    <location>
        <begin position="157"/>
        <end position="177"/>
    </location>
</feature>
<feature type="transmembrane region" description="Helical; Name=4" evidence="2">
    <location>
        <begin position="195"/>
        <end position="215"/>
    </location>
</feature>
<feature type="transmembrane region" description="Helical; Name=5" evidence="2">
    <location>
        <begin position="219"/>
        <end position="239"/>
    </location>
</feature>
<feature type="transmembrane region" description="Helical; Name=6" evidence="2">
    <location>
        <begin position="266"/>
        <end position="286"/>
    </location>
</feature>
<feature type="short sequence motif" description="NPA 1">
    <location>
        <begin position="137"/>
        <end position="139"/>
    </location>
</feature>
<feature type="short sequence motif" description="NPA 2">
    <location>
        <begin position="248"/>
        <end position="250"/>
    </location>
</feature>
<feature type="modified residue" description="Phosphoserine" evidence="1">
    <location>
        <position position="301"/>
    </location>
</feature>
<keyword id="KW-1003">Cell membrane</keyword>
<keyword id="KW-0472">Membrane</keyword>
<keyword id="KW-0597">Phosphoprotein</keyword>
<keyword id="KW-1185">Reference proteome</keyword>
<keyword id="KW-0677">Repeat</keyword>
<keyword id="KW-0812">Transmembrane</keyword>
<keyword id="KW-1133">Transmembrane helix</keyword>
<keyword id="KW-0813">Transport</keyword>
<name>NIP51_ARATH</name>
<reference key="1">
    <citation type="journal article" date="1999" name="Nature">
        <title>Sequence and analysis of chromosome 4 of the plant Arabidopsis thaliana.</title>
        <authorList>
            <person name="Mayer K.F.X."/>
            <person name="Schueller C."/>
            <person name="Wambutt R."/>
            <person name="Murphy G."/>
            <person name="Volckaert G."/>
            <person name="Pohl T."/>
            <person name="Duesterhoeft A."/>
            <person name="Stiekema W."/>
            <person name="Entian K.-D."/>
            <person name="Terryn N."/>
            <person name="Harris B."/>
            <person name="Ansorge W."/>
            <person name="Brandt P."/>
            <person name="Grivell L.A."/>
            <person name="Rieger M."/>
            <person name="Weichselgartner M."/>
            <person name="de Simone V."/>
            <person name="Obermaier B."/>
            <person name="Mache R."/>
            <person name="Mueller M."/>
            <person name="Kreis M."/>
            <person name="Delseny M."/>
            <person name="Puigdomenech P."/>
            <person name="Watson M."/>
            <person name="Schmidtheini T."/>
            <person name="Reichert B."/>
            <person name="Portetelle D."/>
            <person name="Perez-Alonso M."/>
            <person name="Boutry M."/>
            <person name="Bancroft I."/>
            <person name="Vos P."/>
            <person name="Hoheisel J."/>
            <person name="Zimmermann W."/>
            <person name="Wedler H."/>
            <person name="Ridley P."/>
            <person name="Langham S.-A."/>
            <person name="McCullagh B."/>
            <person name="Bilham L."/>
            <person name="Robben J."/>
            <person name="van der Schueren J."/>
            <person name="Grymonprez B."/>
            <person name="Chuang Y.-J."/>
            <person name="Vandenbussche F."/>
            <person name="Braeken M."/>
            <person name="Weltjens I."/>
            <person name="Voet M."/>
            <person name="Bastiaens I."/>
            <person name="Aert R."/>
            <person name="Defoor E."/>
            <person name="Weitzenegger T."/>
            <person name="Bothe G."/>
            <person name="Ramsperger U."/>
            <person name="Hilbert H."/>
            <person name="Braun M."/>
            <person name="Holzer E."/>
            <person name="Brandt A."/>
            <person name="Peters S."/>
            <person name="van Staveren M."/>
            <person name="Dirkse W."/>
            <person name="Mooijman P."/>
            <person name="Klein Lankhorst R."/>
            <person name="Rose M."/>
            <person name="Hauf J."/>
            <person name="Koetter P."/>
            <person name="Berneiser S."/>
            <person name="Hempel S."/>
            <person name="Feldpausch M."/>
            <person name="Lamberth S."/>
            <person name="Van den Daele H."/>
            <person name="De Keyser A."/>
            <person name="Buysshaert C."/>
            <person name="Gielen J."/>
            <person name="Villarroel R."/>
            <person name="De Clercq R."/>
            <person name="van Montagu M."/>
            <person name="Rogers J."/>
            <person name="Cronin A."/>
            <person name="Quail M.A."/>
            <person name="Bray-Allen S."/>
            <person name="Clark L."/>
            <person name="Doggett J."/>
            <person name="Hall S."/>
            <person name="Kay M."/>
            <person name="Lennard N."/>
            <person name="McLay K."/>
            <person name="Mayes R."/>
            <person name="Pettett A."/>
            <person name="Rajandream M.A."/>
            <person name="Lyne M."/>
            <person name="Benes V."/>
            <person name="Rechmann S."/>
            <person name="Borkova D."/>
            <person name="Bloecker H."/>
            <person name="Scharfe M."/>
            <person name="Grimm M."/>
            <person name="Loehnert T.-H."/>
            <person name="Dose S."/>
            <person name="de Haan M."/>
            <person name="Maarse A.C."/>
            <person name="Schaefer M."/>
            <person name="Mueller-Auer S."/>
            <person name="Gabel C."/>
            <person name="Fuchs M."/>
            <person name="Fartmann B."/>
            <person name="Granderath K."/>
            <person name="Dauner D."/>
            <person name="Herzl A."/>
            <person name="Neumann S."/>
            <person name="Argiriou A."/>
            <person name="Vitale D."/>
            <person name="Liguori R."/>
            <person name="Piravandi E."/>
            <person name="Massenet O."/>
            <person name="Quigley F."/>
            <person name="Clabauld G."/>
            <person name="Muendlein A."/>
            <person name="Felber R."/>
            <person name="Schnabl S."/>
            <person name="Hiller R."/>
            <person name="Schmidt W."/>
            <person name="Lecharny A."/>
            <person name="Aubourg S."/>
            <person name="Chefdor F."/>
            <person name="Cooke R."/>
            <person name="Berger C."/>
            <person name="Monfort A."/>
            <person name="Casacuberta E."/>
            <person name="Gibbons T."/>
            <person name="Weber N."/>
            <person name="Vandenbol M."/>
            <person name="Bargues M."/>
            <person name="Terol J."/>
            <person name="Torres A."/>
            <person name="Perez-Perez A."/>
            <person name="Purnelle B."/>
            <person name="Bent E."/>
            <person name="Johnson S."/>
            <person name="Tacon D."/>
            <person name="Jesse T."/>
            <person name="Heijnen L."/>
            <person name="Schwarz S."/>
            <person name="Scholler P."/>
            <person name="Heber S."/>
            <person name="Francs P."/>
            <person name="Bielke C."/>
            <person name="Frishman D."/>
            <person name="Haase D."/>
            <person name="Lemcke K."/>
            <person name="Mewes H.-W."/>
            <person name="Stocker S."/>
            <person name="Zaccaria P."/>
            <person name="Bevan M."/>
            <person name="Wilson R.K."/>
            <person name="de la Bastide M."/>
            <person name="Habermann K."/>
            <person name="Parnell L."/>
            <person name="Dedhia N."/>
            <person name="Gnoj L."/>
            <person name="Schutz K."/>
            <person name="Huang E."/>
            <person name="Spiegel L."/>
            <person name="Sekhon M."/>
            <person name="Murray J."/>
            <person name="Sheet P."/>
            <person name="Cordes M."/>
            <person name="Abu-Threideh J."/>
            <person name="Stoneking T."/>
            <person name="Kalicki J."/>
            <person name="Graves T."/>
            <person name="Harmon G."/>
            <person name="Edwards J."/>
            <person name="Latreille P."/>
            <person name="Courtney L."/>
            <person name="Cloud J."/>
            <person name="Abbott A."/>
            <person name="Scott K."/>
            <person name="Johnson D."/>
            <person name="Minx P."/>
            <person name="Bentley D."/>
            <person name="Fulton B."/>
            <person name="Miller N."/>
            <person name="Greco T."/>
            <person name="Kemp K."/>
            <person name="Kramer J."/>
            <person name="Fulton L."/>
            <person name="Mardis E."/>
            <person name="Dante M."/>
            <person name="Pepin K."/>
            <person name="Hillier L.W."/>
            <person name="Nelson J."/>
            <person name="Spieth J."/>
            <person name="Ryan E."/>
            <person name="Andrews S."/>
            <person name="Geisel C."/>
            <person name="Layman D."/>
            <person name="Du H."/>
            <person name="Ali J."/>
            <person name="Berghoff A."/>
            <person name="Jones K."/>
            <person name="Drone K."/>
            <person name="Cotton M."/>
            <person name="Joshu C."/>
            <person name="Antonoiu B."/>
            <person name="Zidanic M."/>
            <person name="Strong C."/>
            <person name="Sun H."/>
            <person name="Lamar B."/>
            <person name="Yordan C."/>
            <person name="Ma P."/>
            <person name="Zhong J."/>
            <person name="Preston R."/>
            <person name="Vil D."/>
            <person name="Shekher M."/>
            <person name="Matero A."/>
            <person name="Shah R."/>
            <person name="Swaby I.K."/>
            <person name="O'Shaughnessy A."/>
            <person name="Rodriguez M."/>
            <person name="Hoffman J."/>
            <person name="Till S."/>
            <person name="Granat S."/>
            <person name="Shohdy N."/>
            <person name="Hasegawa A."/>
            <person name="Hameed A."/>
            <person name="Lodhi M."/>
            <person name="Johnson A."/>
            <person name="Chen E."/>
            <person name="Marra M.A."/>
            <person name="Martienssen R."/>
            <person name="McCombie W.R."/>
        </authorList>
    </citation>
    <scope>NUCLEOTIDE SEQUENCE [LARGE SCALE GENOMIC DNA]</scope>
    <source>
        <strain>cv. Columbia</strain>
    </source>
</reference>
<reference key="2">
    <citation type="journal article" date="2017" name="Plant J.">
        <title>Araport11: a complete reannotation of the Arabidopsis thaliana reference genome.</title>
        <authorList>
            <person name="Cheng C.Y."/>
            <person name="Krishnakumar V."/>
            <person name="Chan A.P."/>
            <person name="Thibaud-Nissen F."/>
            <person name="Schobel S."/>
            <person name="Town C.D."/>
        </authorList>
    </citation>
    <scope>GENOME REANNOTATION</scope>
    <source>
        <strain>cv. Columbia</strain>
    </source>
</reference>
<reference key="3">
    <citation type="submission" date="2002-03" db="EMBL/GenBank/DDBJ databases">
        <title>Full-length cDNA from Arabidopsis thaliana.</title>
        <authorList>
            <person name="Brover V.V."/>
            <person name="Troukhan M.E."/>
            <person name="Alexandrov N.A."/>
            <person name="Lu Y.-P."/>
            <person name="Flavell R.B."/>
            <person name="Feldmann K.A."/>
        </authorList>
    </citation>
    <scope>NUCLEOTIDE SEQUENCE [LARGE SCALE MRNA]</scope>
</reference>
<reference key="4">
    <citation type="journal article" date="2002" name="Genome Biol.">
        <title>From genome to function: the Arabidopsis aquaporins.</title>
        <authorList>
            <person name="Quigley F."/>
            <person name="Rosenberg J.M."/>
            <person name="Shachar-Hill Y."/>
            <person name="Bohnert H.J."/>
        </authorList>
    </citation>
    <scope>NOMENCLATURE</scope>
    <scope>TISSUE SPECIFICITY</scope>
</reference>
<reference key="5">
    <citation type="journal article" date="2006" name="Plant Cell">
        <title>The Arabidopsis major intrinsic protein NIP5;1 is essential for efficient boron uptake and plant development under boron limitation.</title>
        <authorList>
            <person name="Takano J."/>
            <person name="Wada M."/>
            <person name="Ludewig U."/>
            <person name="Schaaf G."/>
            <person name="von Wiren N."/>
            <person name="Fujiwara T."/>
        </authorList>
    </citation>
    <scope>FUNCTION</scope>
    <scope>SUBCELLULAR LOCATION</scope>
    <scope>INDUCTION</scope>
    <scope>DISRUPTION PHENOTYPE</scope>
</reference>
<gene>
    <name type="primary">NIP5-1</name>
    <name type="synonym">NLM6</name>
    <name type="ordered locus">At4g10380</name>
    <name type="ORF">F24G24.180</name>
</gene>
<sequence length="304" mass="31493">MAPPEAEVGAVMVMAPPTPGTPGTPGGPLITGMRVDSMSFDHRKPTPRCKCLPVMGSTWGQHDTCFTDFPSPDVSLTRKLGAEFVGTFILIFTATAGPIVNQKYDGAETLIGNAACAGLAVMIIILSTGHISGAHLNPSLTIAFAALRHFPWAHVPAYIAAQVSASICASFALKGVFHPFMSGGVTIPSVSLGQAFALEFIITFILLFVVTAVATDTRAVGELAGIAVGATVMLNILVAGPSTGGSMNPVRTLGPAVASGNYRSLWVYLVAPTLGAISGAAVYTGVKLNDSVTDPPRPVRSFRR</sequence>
<evidence type="ECO:0000250" key="1">
    <source>
        <dbReference type="UniProtKB" id="P43286"/>
    </source>
</evidence>
<evidence type="ECO:0000255" key="2"/>
<evidence type="ECO:0000269" key="3">
    <source>
    </source>
</evidence>
<evidence type="ECO:0000269" key="4">
    <source>
    </source>
</evidence>
<evidence type="ECO:0000305" key="5"/>